<organism>
    <name type="scientific">Rattus norvegicus</name>
    <name type="common">Rat</name>
    <dbReference type="NCBI Taxonomy" id="10116"/>
    <lineage>
        <taxon>Eukaryota</taxon>
        <taxon>Metazoa</taxon>
        <taxon>Chordata</taxon>
        <taxon>Craniata</taxon>
        <taxon>Vertebrata</taxon>
        <taxon>Euteleostomi</taxon>
        <taxon>Mammalia</taxon>
        <taxon>Eutheria</taxon>
        <taxon>Euarchontoglires</taxon>
        <taxon>Glires</taxon>
        <taxon>Rodentia</taxon>
        <taxon>Myomorpha</taxon>
        <taxon>Muroidea</taxon>
        <taxon>Muridae</taxon>
        <taxon>Murinae</taxon>
        <taxon>Rattus</taxon>
    </lineage>
</organism>
<sequence>MAAPRMPPSRLSGIMVPAPIQDLEALRALTALFKEQRNRETAPRTIFQRVLDILKKSTQAVELACRDPSQVEHLASSLQLITECFRCLRNACIECSVNQNSIRNLDTIGVAVDLVLLFRELRVEQDSLLTAFRCGLQFLGNVASRNEDSQSIVWVHAFPELFMSCLNHPDKKIVAYCSMILFTSLNSERMKDLEENLNIAINVIEAHQKHPESEWPFLIITDHFLKSPELVEAMYGKLSNQERVTLLDIMIAKIVGDEQLTKDDISIFLRHAELIANSFVDQCRNVLKLTSEPQTEDKEALVTIRLLDVLCEMTSNTELLGYLQVFPGLMERVIDVLRVIHSVGKDSTNIFSPSDSLKAEGDIEHMTEGFKSHLIRLIGNLCYKNKENQDKVNELDGIPLILDSSNIDDNNPFMMQWVVYAVRNLTEDNSQNQDFIAKMEEQGLADASLLKKMGFEVEKSGDKLILKSNNDIPPP</sequence>
<evidence type="ECO:0000250" key="1">
    <source>
        <dbReference type="UniProtKB" id="P28658"/>
    </source>
</evidence>
<evidence type="ECO:0000250" key="2">
    <source>
        <dbReference type="UniProtKB" id="Q9UBB4"/>
    </source>
</evidence>
<evidence type="ECO:0000269" key="3">
    <source>
    </source>
</evidence>
<evidence type="ECO:0000269" key="4">
    <source>
    </source>
</evidence>
<evidence type="ECO:0000269" key="5">
    <source>
    </source>
</evidence>
<evidence type="ECO:0000305" key="6"/>
<comment type="function">
    <text evidence="1 2 3 4 5">May play a role in the regulation of cytokinesis (By similarity). May play a role in signaling by stimulating protein glycosylation (PubMed:16714295). Induces neuritogenesis by activating the Ras-MAP kinase pathway and is necessary for the survival of cerebellar neurons (PubMed:15201271, PubMed:16498633). Does not appear to play a major role in ciliogenesis (By similarity).</text>
</comment>
<comment type="subunit">
    <text evidence="2 3">Homooligomer (PubMed:15201271). Interacts with GNB2. Interacts with IQCB1 (By similarity). Interacts with OGT (PubMed:15201271).</text>
</comment>
<comment type="subcellular location">
    <subcellularLocation>
        <location evidence="3">Cytoplasm</location>
    </subcellularLocation>
    <subcellularLocation>
        <location evidence="2">Cytoplasm</location>
        <location evidence="2">Perinuclear region</location>
    </subcellularLocation>
    <subcellularLocation>
        <location evidence="2">Midbody</location>
    </subcellularLocation>
    <subcellularLocation>
        <location evidence="1">Cytoplasm</location>
        <location evidence="1">Cytoskeleton</location>
        <location evidence="1">Cilium basal body</location>
    </subcellularLocation>
    <subcellularLocation>
        <location evidence="1">Cytoplasm</location>
        <location evidence="1">Cytoskeleton</location>
        <location evidence="1">Microtubule organizing center</location>
        <location evidence="1">Centrosome</location>
        <location evidence="1">Centriole</location>
    </subcellularLocation>
    <text evidence="2">Localizes to the midbody during telophase.</text>
</comment>
<comment type="tissue specificity">
    <text evidence="3">Ubiquitous distribution. Markedly increased expression in testis, adrenals, and brain.</text>
</comment>
<comment type="PTM">
    <text evidence="2">Polyubiquitinated.</text>
</comment>
<comment type="PTM">
    <text evidence="2">Phosphorylation at Ser-12 by AURKB promotes the association of ATXN10 with PLK1. Phosphorylation at Ser-77 and Thr-82 by PLK1 may play a role in the regulation of cytokinesis and may stimulate the proteasome-mediated degradation of ATXN10.</text>
</comment>
<comment type="similarity">
    <text evidence="6">Belongs to the ataxin-10 family.</text>
</comment>
<gene>
    <name type="primary">Atxn10</name>
    <name type="synonym">Sca10</name>
</gene>
<dbReference type="EMBL" id="AJ301634">
    <property type="protein sequence ID" value="CAC16214.1"/>
    <property type="molecule type" value="mRNA"/>
</dbReference>
<dbReference type="EMBL" id="BC062087">
    <property type="protein sequence ID" value="AAH62087.1"/>
    <property type="molecule type" value="mRNA"/>
</dbReference>
<dbReference type="RefSeq" id="NP_579847.1">
    <property type="nucleotide sequence ID" value="NM_133313.2"/>
</dbReference>
<dbReference type="SMR" id="Q9ER24"/>
<dbReference type="BioGRID" id="250992">
    <property type="interactions" value="2"/>
</dbReference>
<dbReference type="FunCoup" id="Q9ER24">
    <property type="interactions" value="3294"/>
</dbReference>
<dbReference type="IntAct" id="Q9ER24">
    <property type="interactions" value="4"/>
</dbReference>
<dbReference type="STRING" id="10116.ENSRNOP00000021071"/>
<dbReference type="iPTMnet" id="Q9ER24"/>
<dbReference type="PhosphoSitePlus" id="Q9ER24"/>
<dbReference type="jPOST" id="Q9ER24"/>
<dbReference type="PaxDb" id="10116-ENSRNOP00000021071"/>
<dbReference type="GeneID" id="170821"/>
<dbReference type="KEGG" id="rno:170821"/>
<dbReference type="AGR" id="RGD:621813"/>
<dbReference type="CTD" id="25814"/>
<dbReference type="RGD" id="621813">
    <property type="gene designation" value="Atxn10"/>
</dbReference>
<dbReference type="VEuPathDB" id="HostDB:ENSRNOG00000014637"/>
<dbReference type="eggNOG" id="KOG2676">
    <property type="taxonomic scope" value="Eukaryota"/>
</dbReference>
<dbReference type="HOGENOM" id="CLU_046084_1_0_1"/>
<dbReference type="InParanoid" id="Q9ER24"/>
<dbReference type="OrthoDB" id="379794at2759"/>
<dbReference type="PhylomeDB" id="Q9ER24"/>
<dbReference type="TreeFam" id="TF323870"/>
<dbReference type="PRO" id="PR:Q9ER24"/>
<dbReference type="Proteomes" id="UP000002494">
    <property type="component" value="Chromosome 7"/>
</dbReference>
<dbReference type="Bgee" id="ENSRNOG00000014637">
    <property type="expression patterns" value="Expressed in cerebellum and 20 other cell types or tissues"/>
</dbReference>
<dbReference type="GO" id="GO:0005814">
    <property type="term" value="C:centriole"/>
    <property type="evidence" value="ECO:0000250"/>
    <property type="project" value="UniProtKB"/>
</dbReference>
<dbReference type="GO" id="GO:0036064">
    <property type="term" value="C:ciliary basal body"/>
    <property type="evidence" value="ECO:0000250"/>
    <property type="project" value="UniProtKB"/>
</dbReference>
<dbReference type="GO" id="GO:0005737">
    <property type="term" value="C:cytoplasm"/>
    <property type="evidence" value="ECO:0000250"/>
    <property type="project" value="UniProtKB"/>
</dbReference>
<dbReference type="GO" id="GO:0005829">
    <property type="term" value="C:cytosol"/>
    <property type="evidence" value="ECO:0000318"/>
    <property type="project" value="GO_Central"/>
</dbReference>
<dbReference type="GO" id="GO:0030425">
    <property type="term" value="C:dendrite"/>
    <property type="evidence" value="ECO:0000266"/>
    <property type="project" value="RGD"/>
</dbReference>
<dbReference type="GO" id="GO:0030496">
    <property type="term" value="C:midbody"/>
    <property type="evidence" value="ECO:0000250"/>
    <property type="project" value="UniProtKB"/>
</dbReference>
<dbReference type="GO" id="GO:0043025">
    <property type="term" value="C:neuronal cell body"/>
    <property type="evidence" value="ECO:0000266"/>
    <property type="project" value="RGD"/>
</dbReference>
<dbReference type="GO" id="GO:0048471">
    <property type="term" value="C:perinuclear region of cytoplasm"/>
    <property type="evidence" value="ECO:0000250"/>
    <property type="project" value="UniProtKB"/>
</dbReference>
<dbReference type="GO" id="GO:0019899">
    <property type="term" value="F:enzyme binding"/>
    <property type="evidence" value="ECO:0000353"/>
    <property type="project" value="RGD"/>
</dbReference>
<dbReference type="GO" id="GO:0042802">
    <property type="term" value="F:identical protein binding"/>
    <property type="evidence" value="ECO:0000353"/>
    <property type="project" value="RGD"/>
</dbReference>
<dbReference type="GO" id="GO:0051301">
    <property type="term" value="P:cell division"/>
    <property type="evidence" value="ECO:0007669"/>
    <property type="project" value="UniProtKB-KW"/>
</dbReference>
<dbReference type="GO" id="GO:0060271">
    <property type="term" value="P:cilium assembly"/>
    <property type="evidence" value="ECO:0000266"/>
    <property type="project" value="RGD"/>
</dbReference>
<dbReference type="GO" id="GO:0007399">
    <property type="term" value="P:nervous system development"/>
    <property type="evidence" value="ECO:0000266"/>
    <property type="project" value="RGD"/>
</dbReference>
<dbReference type="GO" id="GO:0031175">
    <property type="term" value="P:neuron projection development"/>
    <property type="evidence" value="ECO:0000250"/>
    <property type="project" value="UniProtKB"/>
</dbReference>
<dbReference type="GO" id="GO:0032465">
    <property type="term" value="P:regulation of cytokinesis"/>
    <property type="evidence" value="ECO:0000250"/>
    <property type="project" value="UniProtKB"/>
</dbReference>
<dbReference type="FunFam" id="1.25.10.10:FF:000897">
    <property type="entry name" value="Ataxin-10"/>
    <property type="match status" value="1"/>
</dbReference>
<dbReference type="Gene3D" id="1.25.10.10">
    <property type="entry name" value="Leucine-rich Repeat Variant"/>
    <property type="match status" value="2"/>
</dbReference>
<dbReference type="InterPro" id="IPR011989">
    <property type="entry name" value="ARM-like"/>
</dbReference>
<dbReference type="InterPro" id="IPR016024">
    <property type="entry name" value="ARM-type_fold"/>
</dbReference>
<dbReference type="InterPro" id="IPR051374">
    <property type="entry name" value="Ataxin-10/CTR86_families"/>
</dbReference>
<dbReference type="InterPro" id="IPR019156">
    <property type="entry name" value="Ataxin-10_domain"/>
</dbReference>
<dbReference type="PANTHER" id="PTHR13255">
    <property type="entry name" value="ATAXIN-10"/>
    <property type="match status" value="1"/>
</dbReference>
<dbReference type="PANTHER" id="PTHR13255:SF0">
    <property type="entry name" value="ATAXIN-10"/>
    <property type="match status" value="1"/>
</dbReference>
<dbReference type="Pfam" id="PF09759">
    <property type="entry name" value="Atx10homo_assoc"/>
    <property type="match status" value="1"/>
</dbReference>
<dbReference type="SUPFAM" id="SSF48371">
    <property type="entry name" value="ARM repeat"/>
    <property type="match status" value="1"/>
</dbReference>
<accession>Q9ER24</accession>
<name>ATX10_RAT</name>
<keyword id="KW-0131">Cell cycle</keyword>
<keyword id="KW-0132">Cell division</keyword>
<keyword id="KW-0966">Cell projection</keyword>
<keyword id="KW-0963">Cytoplasm</keyword>
<keyword id="KW-0206">Cytoskeleton</keyword>
<keyword id="KW-0488">Methylation</keyword>
<keyword id="KW-0597">Phosphoprotein</keyword>
<keyword id="KW-1185">Reference proteome</keyword>
<keyword id="KW-0832">Ubl conjugation</keyword>
<feature type="chain" id="PRO_0000064750" description="Ataxin-10">
    <location>
        <begin position="1"/>
        <end position="475"/>
    </location>
</feature>
<feature type="modified residue" description="Omega-N-methylarginine" evidence="1">
    <location>
        <position position="10"/>
    </location>
</feature>
<feature type="modified residue" description="Phosphoserine" evidence="2">
    <location>
        <position position="12"/>
    </location>
</feature>
<feature type="modified residue" description="Phosphoserine" evidence="2">
    <location>
        <position position="77"/>
    </location>
</feature>
<feature type="modified residue" description="Phosphothreonine" evidence="2">
    <location>
        <position position="82"/>
    </location>
</feature>
<feature type="modified residue" description="Phosphoserine" evidence="2">
    <location>
        <position position="430"/>
    </location>
</feature>
<protein>
    <recommendedName>
        <fullName>Ataxin-10</fullName>
    </recommendedName>
    <alternativeName>
        <fullName>Neuronal beta-catenin-like protein</fullName>
    </alternativeName>
    <alternativeName>
        <fullName>Spinocerebellar ataxia type 10 protein homolog</fullName>
    </alternativeName>
</protein>
<reference key="1">
    <citation type="journal article" date="2004" name="J. Biol. Chem.">
        <title>Ataxin-10, the spinocerebellar ataxia type 10 neurodegenerative disorder protein, is essential for survival of cerebellar neurons.</title>
        <authorList>
            <person name="Maerz P."/>
            <person name="Probst A."/>
            <person name="Lang S."/>
            <person name="Schwager M."/>
            <person name="Rose-John S."/>
            <person name="Otten U."/>
            <person name="Ozbek S."/>
        </authorList>
    </citation>
    <scope>NUCLEOTIDE SEQUENCE [MRNA]</scope>
    <scope>FUNCTION</scope>
    <scope>TISSUE SPECIFICITY</scope>
    <scope>SUBCELLULAR LOCATION</scope>
    <scope>SUBUNIT</scope>
</reference>
<reference key="2">
    <citation type="journal article" date="2004" name="Genome Res.">
        <title>The status, quality, and expansion of the NIH full-length cDNA project: the Mammalian Gene Collection (MGC).</title>
        <authorList>
            <consortium name="The MGC Project Team"/>
        </authorList>
    </citation>
    <scope>NUCLEOTIDE SEQUENCE [LARGE SCALE MRNA]</scope>
    <source>
        <tissue>Prostate</tissue>
    </source>
</reference>
<reference key="3">
    <citation type="journal article" date="2006" name="J. Biol. Chem.">
        <title>Ataxin-10 interacts with O-linked beta-N-acetylglucosamine transferase in the brain.</title>
        <authorList>
            <person name="Maerz P."/>
            <person name="Stetefeld J."/>
            <person name="Bendfeldt K."/>
            <person name="Nitsch C."/>
            <person name="Reinstein J."/>
            <person name="Shoeman R.L."/>
            <person name="Dimitriades-Schmutz B."/>
            <person name="Schwager M."/>
            <person name="Leiser D."/>
            <person name="Ozcan S."/>
            <person name="Otten U."/>
            <person name="Ozbek S."/>
        </authorList>
    </citation>
    <scope>INTERACTION WITH OGT</scope>
    <scope>FUNCTION</scope>
</reference>
<reference key="4">
    <citation type="journal article" date="2006" name="J. Neurosci. Res.">
        <title>Ataxin 10 induces neuritogenesis via interaction with G-protein beta2 subunit.</title>
        <authorList>
            <person name="Waragai M."/>
            <person name="Nagamitsu S."/>
            <person name="Xu W."/>
            <person name="Li Y.J."/>
            <person name="Lin X."/>
            <person name="Ashizawa T."/>
        </authorList>
    </citation>
    <scope>FUNCTION</scope>
</reference>
<proteinExistence type="evidence at protein level"/>